<dbReference type="EMBL" id="L34290">
    <property type="protein sequence ID" value="AAA93084.1"/>
    <property type="molecule type" value="mRNA"/>
</dbReference>
<dbReference type="EMBL" id="U69145">
    <property type="protein sequence ID" value="AAC52886.1"/>
    <property type="molecule type" value="mRNA"/>
</dbReference>
<dbReference type="EMBL" id="BC016135">
    <property type="protein sequence ID" value="AAH16135.1"/>
    <property type="molecule type" value="mRNA"/>
</dbReference>
<dbReference type="CCDS" id="CCDS40692.1"/>
<dbReference type="CCDS" id="CCDS90626.1">
    <molecule id="P62881-2"/>
</dbReference>
<dbReference type="PIR" id="A54969">
    <property type="entry name" value="A54969"/>
</dbReference>
<dbReference type="RefSeq" id="NP_034443.1">
    <molecule id="P62881-1"/>
    <property type="nucleotide sequence ID" value="NM_010313.2"/>
</dbReference>
<dbReference type="RefSeq" id="NP_619733.1">
    <molecule id="P62881-2"/>
    <property type="nucleotide sequence ID" value="NM_138719.5"/>
</dbReference>
<dbReference type="PDB" id="2PBI">
    <property type="method" value="X-ray"/>
    <property type="resolution" value="1.95 A"/>
    <property type="chains" value="B/D=43-395"/>
</dbReference>
<dbReference type="PDB" id="6N9G">
    <property type="method" value="X-ray"/>
    <property type="resolution" value="2.13 A"/>
    <property type="chains" value="C/D=43-395"/>
</dbReference>
<dbReference type="PDB" id="7SHF">
    <property type="method" value="EM"/>
    <property type="resolution" value="3.40 A"/>
    <property type="chains" value="D=43-395"/>
</dbReference>
<dbReference type="PDBsum" id="2PBI"/>
<dbReference type="PDBsum" id="6N9G"/>
<dbReference type="PDBsum" id="7SHF"/>
<dbReference type="EMDB" id="EMD-25126"/>
<dbReference type="SMR" id="P62881"/>
<dbReference type="BioGRID" id="199981">
    <property type="interactions" value="26"/>
</dbReference>
<dbReference type="CORUM" id="P62881"/>
<dbReference type="DIP" id="DIP-264N"/>
<dbReference type="FunCoup" id="P62881">
    <property type="interactions" value="991"/>
</dbReference>
<dbReference type="IntAct" id="P62881">
    <property type="interactions" value="2"/>
</dbReference>
<dbReference type="STRING" id="10090.ENSMUSP00000149938"/>
<dbReference type="iPTMnet" id="P62881"/>
<dbReference type="PhosphoSitePlus" id="P62881"/>
<dbReference type="SwissPalm" id="P62881"/>
<dbReference type="PaxDb" id="10090-ENSMUSP00000076155"/>
<dbReference type="PeptideAtlas" id="P62881"/>
<dbReference type="ProteomicsDB" id="271413"/>
<dbReference type="ProteomicsDB" id="271414">
    <molecule id="P62881-2"/>
</dbReference>
<dbReference type="Pumba" id="P62881"/>
<dbReference type="Antibodypedia" id="24930">
    <property type="antibodies" value="300 antibodies from 32 providers"/>
</dbReference>
<dbReference type="DNASU" id="14697"/>
<dbReference type="Ensembl" id="ENSMUST00000076889.7">
    <molecule id="P62881-1"/>
    <property type="protein sequence ID" value="ENSMUSP00000076155.7"/>
    <property type="gene ID" value="ENSMUSG00000032192.10"/>
</dbReference>
<dbReference type="Ensembl" id="ENSMUST00000213990.2">
    <molecule id="P62881-1"/>
    <property type="protein sequence ID" value="ENSMUSP00000149938.2"/>
    <property type="gene ID" value="ENSMUSG00000032192.10"/>
</dbReference>
<dbReference type="Ensembl" id="ENSMUST00000215875.2">
    <molecule id="P62881-2"/>
    <property type="protein sequence ID" value="ENSMUSP00000150492.2"/>
    <property type="gene ID" value="ENSMUSG00000032192.10"/>
</dbReference>
<dbReference type="GeneID" id="14697"/>
<dbReference type="KEGG" id="mmu:14697"/>
<dbReference type="UCSC" id="uc009qry.2">
    <property type="organism name" value="mouse"/>
</dbReference>
<dbReference type="AGR" id="MGI:101848"/>
<dbReference type="CTD" id="10681"/>
<dbReference type="MGI" id="MGI:101848">
    <property type="gene designation" value="Gnb5"/>
</dbReference>
<dbReference type="VEuPathDB" id="HostDB:ENSMUSG00000032192"/>
<dbReference type="eggNOG" id="KOG0286">
    <property type="taxonomic scope" value="Eukaryota"/>
</dbReference>
<dbReference type="GeneTree" id="ENSGT01000000214413"/>
<dbReference type="HOGENOM" id="CLU_000288_57_34_1"/>
<dbReference type="InParanoid" id="P62881"/>
<dbReference type="OrthoDB" id="10255630at2759"/>
<dbReference type="PhylomeDB" id="P62881"/>
<dbReference type="TreeFam" id="TF106149"/>
<dbReference type="Reactome" id="R-MMU-1296041">
    <property type="pathway name" value="Activation of G protein gated Potassium channels"/>
</dbReference>
<dbReference type="Reactome" id="R-MMU-202040">
    <property type="pathway name" value="G-protein activation"/>
</dbReference>
<dbReference type="Reactome" id="R-MMU-2514859">
    <property type="pathway name" value="Inactivation, recovery and regulation of the phototransduction cascade"/>
</dbReference>
<dbReference type="Reactome" id="R-MMU-381676">
    <property type="pathway name" value="Glucagon-like Peptide-1 (GLP1) regulates insulin secretion"/>
</dbReference>
<dbReference type="Reactome" id="R-MMU-392170">
    <property type="pathway name" value="ADP signalling through P2Y purinoceptor 12"/>
</dbReference>
<dbReference type="Reactome" id="R-MMU-392451">
    <property type="pathway name" value="G beta:gamma signalling through PI3Kgamma"/>
</dbReference>
<dbReference type="Reactome" id="R-MMU-392851">
    <property type="pathway name" value="Prostacyclin signalling through prostacyclin receptor"/>
</dbReference>
<dbReference type="Reactome" id="R-MMU-400042">
    <property type="pathway name" value="Adrenaline,noradrenaline inhibits insulin secretion"/>
</dbReference>
<dbReference type="Reactome" id="R-MMU-4086398">
    <property type="pathway name" value="Ca2+ pathway"/>
</dbReference>
<dbReference type="Reactome" id="R-MMU-416476">
    <property type="pathway name" value="G alpha (q) signalling events"/>
</dbReference>
<dbReference type="Reactome" id="R-MMU-416482">
    <property type="pathway name" value="G alpha (12/13) signalling events"/>
</dbReference>
<dbReference type="Reactome" id="R-MMU-418217">
    <property type="pathway name" value="G beta:gamma signalling through PLC beta"/>
</dbReference>
<dbReference type="Reactome" id="R-MMU-418555">
    <property type="pathway name" value="G alpha (s) signalling events"/>
</dbReference>
<dbReference type="Reactome" id="R-MMU-418592">
    <property type="pathway name" value="ADP signalling through P2Y purinoceptor 1"/>
</dbReference>
<dbReference type="Reactome" id="R-MMU-418594">
    <property type="pathway name" value="G alpha (i) signalling events"/>
</dbReference>
<dbReference type="Reactome" id="R-MMU-418597">
    <property type="pathway name" value="G alpha (z) signalling events"/>
</dbReference>
<dbReference type="Reactome" id="R-MMU-420092">
    <property type="pathway name" value="Glucagon-type ligand receptors"/>
</dbReference>
<dbReference type="Reactome" id="R-MMU-428930">
    <property type="pathway name" value="Thromboxane signalling through TP receptor"/>
</dbReference>
<dbReference type="Reactome" id="R-MMU-432040">
    <property type="pathway name" value="Vasopressin regulates renal water homeostasis via Aquaporins"/>
</dbReference>
<dbReference type="Reactome" id="R-MMU-456926">
    <property type="pathway name" value="Thrombin signalling through proteinase activated receptors (PARs)"/>
</dbReference>
<dbReference type="Reactome" id="R-MMU-500657">
    <property type="pathway name" value="Presynaptic function of Kainate receptors"/>
</dbReference>
<dbReference type="Reactome" id="R-MMU-6814122">
    <property type="pathway name" value="Cooperation of PDCL (PhLP1) and TRiC/CCT in G-protein beta folding"/>
</dbReference>
<dbReference type="Reactome" id="R-MMU-8964315">
    <property type="pathway name" value="G beta:gamma signalling through BTK"/>
</dbReference>
<dbReference type="Reactome" id="R-MMU-8964616">
    <property type="pathway name" value="G beta:gamma signalling through CDC42"/>
</dbReference>
<dbReference type="Reactome" id="R-MMU-9009391">
    <property type="pathway name" value="Extra-nuclear estrogen signaling"/>
</dbReference>
<dbReference type="Reactome" id="R-MMU-9634597">
    <property type="pathway name" value="GPER1 signaling"/>
</dbReference>
<dbReference type="Reactome" id="R-MMU-9856530">
    <property type="pathway name" value="High laminar flow shear stress activates signaling by PIEZO1 and PECAM1:CDH5:KDR in endothelial cells"/>
</dbReference>
<dbReference type="Reactome" id="R-MMU-997272">
    <property type="pathway name" value="Inhibition of voltage gated Ca2+ channels via Gbeta/gamma subunits"/>
</dbReference>
<dbReference type="BioGRID-ORCS" id="14697">
    <property type="hits" value="3 hits in 80 CRISPR screens"/>
</dbReference>
<dbReference type="CD-CODE" id="CE726F99">
    <property type="entry name" value="Postsynaptic density"/>
</dbReference>
<dbReference type="ChiTaRS" id="Gnb5">
    <property type="organism name" value="mouse"/>
</dbReference>
<dbReference type="EvolutionaryTrace" id="P62881"/>
<dbReference type="PRO" id="PR:P62881"/>
<dbReference type="Proteomes" id="UP000000589">
    <property type="component" value="Chromosome 9"/>
</dbReference>
<dbReference type="RNAct" id="P62881">
    <property type="molecule type" value="protein"/>
</dbReference>
<dbReference type="Bgee" id="ENSMUSG00000032192">
    <property type="expression patterns" value="Expressed in retinal neural layer and 261 other cell types or tissues"/>
</dbReference>
<dbReference type="ExpressionAtlas" id="P62881">
    <property type="expression patterns" value="baseline and differential"/>
</dbReference>
<dbReference type="GO" id="GO:0051286">
    <property type="term" value="C:cell tip"/>
    <property type="evidence" value="ECO:0000314"/>
    <property type="project" value="MGI"/>
</dbReference>
<dbReference type="GO" id="GO:0005829">
    <property type="term" value="C:cytosol"/>
    <property type="evidence" value="ECO:0007669"/>
    <property type="project" value="Ensembl"/>
</dbReference>
<dbReference type="GO" id="GO:0030425">
    <property type="term" value="C:dendrite"/>
    <property type="evidence" value="ECO:0000314"/>
    <property type="project" value="MGI"/>
</dbReference>
<dbReference type="GO" id="GO:0043209">
    <property type="term" value="C:myelin sheath"/>
    <property type="evidence" value="ECO:0007005"/>
    <property type="project" value="UniProtKB"/>
</dbReference>
<dbReference type="GO" id="GO:0005634">
    <property type="term" value="C:nucleus"/>
    <property type="evidence" value="ECO:0000314"/>
    <property type="project" value="MGI"/>
</dbReference>
<dbReference type="GO" id="GO:0098688">
    <property type="term" value="C:parallel fiber to Purkinje cell synapse"/>
    <property type="evidence" value="ECO:0000314"/>
    <property type="project" value="SynGO"/>
</dbReference>
<dbReference type="GO" id="GO:0001917">
    <property type="term" value="C:photoreceptor inner segment"/>
    <property type="evidence" value="ECO:0000314"/>
    <property type="project" value="MGI"/>
</dbReference>
<dbReference type="GO" id="GO:0005886">
    <property type="term" value="C:plasma membrane"/>
    <property type="evidence" value="ECO:0000314"/>
    <property type="project" value="MGI"/>
</dbReference>
<dbReference type="GO" id="GO:0045211">
    <property type="term" value="C:postsynaptic membrane"/>
    <property type="evidence" value="ECO:0000314"/>
    <property type="project" value="SynGO"/>
</dbReference>
<dbReference type="GO" id="GO:0098793">
    <property type="term" value="C:presynapse"/>
    <property type="evidence" value="ECO:0000314"/>
    <property type="project" value="SynGO"/>
</dbReference>
<dbReference type="GO" id="GO:0042734">
    <property type="term" value="C:presynaptic membrane"/>
    <property type="evidence" value="ECO:0000314"/>
    <property type="project" value="SynGO"/>
</dbReference>
<dbReference type="GO" id="GO:0120200">
    <property type="term" value="C:rod photoreceptor outer segment"/>
    <property type="evidence" value="ECO:0000314"/>
    <property type="project" value="MGI"/>
</dbReference>
<dbReference type="GO" id="GO:0045202">
    <property type="term" value="C:synapse"/>
    <property type="evidence" value="ECO:0000314"/>
    <property type="project" value="SynGO"/>
</dbReference>
<dbReference type="GO" id="GO:0031682">
    <property type="term" value="F:G-protein gamma-subunit binding"/>
    <property type="evidence" value="ECO:0000250"/>
    <property type="project" value="CAFA"/>
</dbReference>
<dbReference type="GO" id="GO:0005096">
    <property type="term" value="F:GTPase activator activity"/>
    <property type="evidence" value="ECO:0007669"/>
    <property type="project" value="Ensembl"/>
</dbReference>
<dbReference type="GO" id="GO:0051087">
    <property type="term" value="F:protein-folding chaperone binding"/>
    <property type="evidence" value="ECO:0000250"/>
    <property type="project" value="CAFA"/>
</dbReference>
<dbReference type="GO" id="GO:1990603">
    <property type="term" value="P:dark adaptation"/>
    <property type="evidence" value="ECO:0000314"/>
    <property type="project" value="MGI"/>
</dbReference>
<dbReference type="GO" id="GO:0007212">
    <property type="term" value="P:G protein-coupled dopamine receptor signaling pathway"/>
    <property type="evidence" value="ECO:0000250"/>
    <property type="project" value="UniProtKB"/>
</dbReference>
<dbReference type="GO" id="GO:0007186">
    <property type="term" value="P:G protein-coupled receptor signaling pathway"/>
    <property type="evidence" value="ECO:0000314"/>
    <property type="project" value="MGI"/>
</dbReference>
<dbReference type="GO" id="GO:0036367">
    <property type="term" value="P:light adaption"/>
    <property type="evidence" value="ECO:0000314"/>
    <property type="project" value="MGI"/>
</dbReference>
<dbReference type="GO" id="GO:1901386">
    <property type="term" value="P:negative regulation of voltage-gated calcium channel activity"/>
    <property type="evidence" value="ECO:0000250"/>
    <property type="project" value="CAFA"/>
</dbReference>
<dbReference type="CDD" id="cd00200">
    <property type="entry name" value="WD40"/>
    <property type="match status" value="1"/>
</dbReference>
<dbReference type="FunFam" id="2.130.10.10:FF:000020">
    <property type="entry name" value="Guanine nucleotide-binding protein beta subunit"/>
    <property type="match status" value="1"/>
</dbReference>
<dbReference type="Gene3D" id="2.130.10.10">
    <property type="entry name" value="YVTN repeat-like/Quinoprotein amine dehydrogenase"/>
    <property type="match status" value="1"/>
</dbReference>
<dbReference type="InterPro" id="IPR020472">
    <property type="entry name" value="G-protein_beta_WD-40_rep"/>
</dbReference>
<dbReference type="InterPro" id="IPR001632">
    <property type="entry name" value="Gprotein_B"/>
</dbReference>
<dbReference type="InterPro" id="IPR016346">
    <property type="entry name" value="Guanine_nucleotide-bd_bsu"/>
</dbReference>
<dbReference type="InterPro" id="IPR015943">
    <property type="entry name" value="WD40/YVTN_repeat-like_dom_sf"/>
</dbReference>
<dbReference type="InterPro" id="IPR019775">
    <property type="entry name" value="WD40_repeat_CS"/>
</dbReference>
<dbReference type="InterPro" id="IPR036322">
    <property type="entry name" value="WD40_repeat_dom_sf"/>
</dbReference>
<dbReference type="InterPro" id="IPR001680">
    <property type="entry name" value="WD40_rpt"/>
</dbReference>
<dbReference type="PANTHER" id="PTHR19850">
    <property type="entry name" value="GUANINE NUCLEOTIDE-BINDING PROTEIN BETA G PROTEIN BETA"/>
    <property type="match status" value="1"/>
</dbReference>
<dbReference type="Pfam" id="PF25391">
    <property type="entry name" value="WD40_Gbeta"/>
    <property type="match status" value="1"/>
</dbReference>
<dbReference type="PIRSF" id="PIRSF002394">
    <property type="entry name" value="GN-bd_beta"/>
    <property type="match status" value="1"/>
</dbReference>
<dbReference type="PRINTS" id="PR00319">
    <property type="entry name" value="GPROTEINB"/>
</dbReference>
<dbReference type="PRINTS" id="PR00320">
    <property type="entry name" value="GPROTEINBRPT"/>
</dbReference>
<dbReference type="SMART" id="SM00320">
    <property type="entry name" value="WD40"/>
    <property type="match status" value="7"/>
</dbReference>
<dbReference type="SUPFAM" id="SSF50978">
    <property type="entry name" value="WD40 repeat-like"/>
    <property type="match status" value="1"/>
</dbReference>
<dbReference type="PROSITE" id="PS00678">
    <property type="entry name" value="WD_REPEATS_1"/>
    <property type="match status" value="3"/>
</dbReference>
<dbReference type="PROSITE" id="PS50082">
    <property type="entry name" value="WD_REPEATS_2"/>
    <property type="match status" value="6"/>
</dbReference>
<dbReference type="PROSITE" id="PS50294">
    <property type="entry name" value="WD_REPEATS_REGION"/>
    <property type="match status" value="1"/>
</dbReference>
<comment type="function">
    <text evidence="1 2">Enhances GTPase-activating protein (GAP) activity of regulator of G protein signaling (RGS) proteins, such as RGS7 and RGS9, hence involved in the termination of the signaling initiated by the G protein coupled receptors (GPCRs) by accelerating the GTP hydrolysis on the G-alpha subunits, thereby promoting their inactivation (By similarity). Increases RGS7 GTPase-activating protein (GAP) activity, thereby regulating mood and cognition (By similarity). Increases RGS9 GTPase-activating protein (GAP) activity, hence contributes to the deactivation of G protein signaling initiated by D(2) dopamine receptors (By similarity). May play an important role in neuronal signaling, including in the parasympathetic, but not sympathetic, control of heart rate (By similarity).</text>
</comment>
<comment type="subunit">
    <text evidence="2 3 4 5 6 7">Component of a complex composed of RGS9 (isoform RGS9-1), GNB5 and RGS9BP; within this complex, the presence of GNB5 stabilizes both itself and RGS9 and increases RGS9 GTPase-activating protein (GAP) activity (PubMed:12119397, PubMed:16908407, PubMed:18204463). Interacts with RGS7, forming the RGS7-GNB5 complex; within this complex, the presence of GNB5 increases RGS7 GTPase-activating protein (GAP) activity (PubMed:31311860, PubMed:34793198). Interacts with GPR158; promotes the GTPase activator activity of the RGS7-GNB5 complex in absence of glycine, in contrast GTPase activator activity of the RGS7-GNB5 complex is inhibited in presence of glycine (PubMed:31311860, PubMed:34793198). Interacts with RGS6 (By similarity).</text>
</comment>
<comment type="subcellular location">
    <subcellularLocation>
        <location evidence="8 9">Membrane</location>
    </subcellularLocation>
</comment>
<comment type="alternative products">
    <event type="alternative splicing"/>
    <isoform>
        <id>P62881-1</id>
        <id>P54314-1</id>
        <name>1</name>
        <name>Long</name>
        <name>Beta-5L</name>
        <name>Gbeta5L</name>
        <sequence type="displayed"/>
    </isoform>
    <isoform>
        <id>P62881-2</id>
        <id>P54314-2</id>
        <name>2</name>
        <sequence type="described" ref="VSP_008766"/>
    </isoform>
</comment>
<comment type="tissue specificity">
    <text evidence="8 9">Isoform 1 is only detected in retina (PubMed:8910430). Isoform 2 is detected in brain (at protein level) (PubMed:8071339). Isoform 2 is detected in brain (PubMed:8071339).</text>
</comment>
<comment type="similarity">
    <text evidence="11">Belongs to the WD repeat G protein beta family.</text>
</comment>
<proteinExistence type="evidence at protein level"/>
<accession>P62881</accession>
<accession>O35354</accession>
<accession>P54314</accession>
<accession>Q91WB3</accession>
<gene>
    <name type="primary">Gnb5</name>
</gene>
<organism>
    <name type="scientific">Mus musculus</name>
    <name type="common">Mouse</name>
    <dbReference type="NCBI Taxonomy" id="10090"/>
    <lineage>
        <taxon>Eukaryota</taxon>
        <taxon>Metazoa</taxon>
        <taxon>Chordata</taxon>
        <taxon>Craniata</taxon>
        <taxon>Vertebrata</taxon>
        <taxon>Euteleostomi</taxon>
        <taxon>Mammalia</taxon>
        <taxon>Eutheria</taxon>
        <taxon>Euarchontoglires</taxon>
        <taxon>Glires</taxon>
        <taxon>Rodentia</taxon>
        <taxon>Myomorpha</taxon>
        <taxon>Muroidea</taxon>
        <taxon>Muridae</taxon>
        <taxon>Murinae</taxon>
        <taxon>Mus</taxon>
        <taxon>Mus</taxon>
    </lineage>
</organism>
<reference key="1">
    <citation type="journal article" date="1994" name="J. Biol. Chem.">
        <title>A fifth member of the mammalian G-protein beta-subunit family. Expression in brain and activation of the beta 2 isotype of phospholipase C.</title>
        <authorList>
            <person name="Watson A.J."/>
            <person name="Katz A."/>
            <person name="Simon M.I."/>
        </authorList>
    </citation>
    <scope>NUCLEOTIDE SEQUENCE [MRNA] (ISOFORM 2)</scope>
    <scope>TISSUE SPECIFICITY</scope>
    <scope>SUBCELLULAR LOCATION</scope>
    <source>
        <tissue>Brain</tissue>
    </source>
</reference>
<reference key="2">
    <citation type="journal article" date="1996" name="J. Biol. Chem.">
        <title>A novel form of the G protein beta subunit Gbeta5 is specifically expressed in the vertebrate retina.</title>
        <authorList>
            <person name="Watson A.J."/>
            <person name="Aragay A.M."/>
            <person name="Slepak V.Z."/>
            <person name="Simon M.I."/>
        </authorList>
    </citation>
    <scope>NUCLEOTIDE SEQUENCE [MRNA] (ISOFORM 1)</scope>
    <scope>SUBCELLULAR LOCATION</scope>
    <scope>TISSUE SPECIFICITY</scope>
</reference>
<reference key="3">
    <citation type="journal article" date="2004" name="Genome Res.">
        <title>The status, quality, and expansion of the NIH full-length cDNA project: the Mammalian Gene Collection (MGC).</title>
        <authorList>
            <consortium name="The MGC Project Team"/>
        </authorList>
    </citation>
    <scope>NUCLEOTIDE SEQUENCE [LARGE SCALE MRNA] (ISOFORM 1)</scope>
    <source>
        <tissue>Eye</tissue>
        <tissue>Retina</tissue>
    </source>
</reference>
<reference key="4">
    <citation type="submission" date="2007-03" db="UniProtKB">
        <authorList>
            <person name="Lubec G."/>
            <person name="Klug S."/>
        </authorList>
    </citation>
    <scope>PROTEIN SEQUENCE OF 75-86 AND 322-338</scope>
    <scope>IDENTIFICATION BY MASS SPECTROMETRY</scope>
    <source>
        <tissue>Hippocampus</tissue>
    </source>
</reference>
<reference key="5">
    <citation type="journal article" date="2002" name="Proc. Natl. Acad. Sci. U.S.A.">
        <title>R9AP, a membrane anchor for the photoreceptor GTPase accelerating protein, RGS9-1.</title>
        <authorList>
            <person name="Hu G."/>
            <person name="Wensel T.G."/>
        </authorList>
    </citation>
    <scope>INTERACTION WITH RGS9 AND RGS9BP</scope>
    <source>
        <strain>C57BL/6 X 129</strain>
        <tissue>Retina</tissue>
    </source>
</reference>
<reference key="6">
    <citation type="journal article" date="2006" name="Neuron">
        <title>RGS expression rate-limits recovery of rod photoresponses.</title>
        <authorList>
            <person name="Krispel C.M."/>
            <person name="Chen D."/>
            <person name="Melling N."/>
            <person name="Chen Y.-J."/>
            <person name="Martemyanov K.A."/>
            <person name="Quillinan N."/>
            <person name="Arshavsky V.Y."/>
            <person name="Wensel T.G."/>
            <person name="Chen C.-K."/>
            <person name="Burns M.E."/>
        </authorList>
    </citation>
    <scope>INTERACTION WITH RGS9 AND RGS9BP</scope>
</reference>
<reference key="7">
    <citation type="journal article" date="2010" name="Cell">
        <title>A tissue-specific atlas of mouse protein phosphorylation and expression.</title>
        <authorList>
            <person name="Huttlin E.L."/>
            <person name="Jedrychowski M.P."/>
            <person name="Elias J.E."/>
            <person name="Goswami T."/>
            <person name="Rad R."/>
            <person name="Beausoleil S.A."/>
            <person name="Villen J."/>
            <person name="Haas W."/>
            <person name="Sowa M.E."/>
            <person name="Gygi S.P."/>
        </authorList>
    </citation>
    <scope>IDENTIFICATION BY MASS SPECTROMETRY [LARGE SCALE ANALYSIS]</scope>
    <source>
        <tissue>Brain</tissue>
    </source>
</reference>
<reference key="8">
    <citation type="journal article" date="2008" name="Nat. Struct. Mol. Biol.">
        <title>Crystal structure of the multifunctional Gbeta5-RGS9 complex.</title>
        <authorList>
            <person name="Cheever M.L."/>
            <person name="Snyder J.T."/>
            <person name="Gershburg S."/>
            <person name="Siderovski D.P."/>
            <person name="Harden T.K."/>
            <person name="Sondek J."/>
        </authorList>
    </citation>
    <scope>X-RAY CRYSTALLOGRAPHY (1.95 ANGSTROMS) OF 43-395 IN COMPLEX WITH RGS9</scope>
    <scope>INTERACTION WITH RGS9</scope>
</reference>
<reference key="9">
    <citation type="journal article" date="2019" name="J. Biol. Chem.">
        <title>The signaling proteins GPR158 and RGS7 modulate excitability of L2/3 pyramidal neurons and control A-type potassium channel in the prelimbic cortex.</title>
        <authorList>
            <person name="Song C."/>
            <person name="Orlandi C."/>
            <person name="Sutton L.P."/>
            <person name="Martemyanov K.A."/>
        </authorList>
    </citation>
    <scope>INTERACTION WITH GPR158</scope>
</reference>
<reference evidence="12" key="10">
    <citation type="journal article" date="2022" name="Science">
        <title>Cryo-EM structure of human GPR158 receptor coupled to the RGS7-Gbeta5 signaling complex.</title>
        <authorList>
            <person name="Patil D.N."/>
            <person name="Singh S."/>
            <person name="Laboute T."/>
            <person name="Strutzenberg T.S."/>
            <person name="Qiu X."/>
            <person name="Wu D."/>
            <person name="Novick S.J."/>
            <person name="Robinson C.V."/>
            <person name="Griffin P.R."/>
            <person name="Hunt J.F."/>
            <person name="Izard T."/>
            <person name="Singh A.K."/>
            <person name="Martemyanov K.A."/>
        </authorList>
    </citation>
    <scope>STRUCTURE BY ELECTRON MICROSCOPY (3.40 ANGSTROMS) OF 43-395 IN COMPLEX WITH GPR158 AND RGS7</scope>
    <scope>INTERACTION WITH RGS7 AND GPR158</scope>
</reference>
<keyword id="KW-0002">3D-structure</keyword>
<keyword id="KW-0025">Alternative splicing</keyword>
<keyword id="KW-0903">Direct protein sequencing</keyword>
<keyword id="KW-0472">Membrane</keyword>
<keyword id="KW-1185">Reference proteome</keyword>
<keyword id="KW-0677">Repeat</keyword>
<keyword id="KW-0807">Transducer</keyword>
<keyword id="KW-0853">WD repeat</keyword>
<name>GNB5_MOUSE</name>
<evidence type="ECO:0000250" key="1">
    <source>
        <dbReference type="UniProtKB" id="A1L271"/>
    </source>
</evidence>
<evidence type="ECO:0000250" key="2">
    <source>
        <dbReference type="UniProtKB" id="O14775"/>
    </source>
</evidence>
<evidence type="ECO:0000269" key="3">
    <source>
    </source>
</evidence>
<evidence type="ECO:0000269" key="4">
    <source>
    </source>
</evidence>
<evidence type="ECO:0000269" key="5">
    <source>
    </source>
</evidence>
<evidence type="ECO:0000269" key="6">
    <source>
    </source>
</evidence>
<evidence type="ECO:0000269" key="7">
    <source>
    </source>
</evidence>
<evidence type="ECO:0000269" key="8">
    <source>
    </source>
</evidence>
<evidence type="ECO:0000269" key="9">
    <source>
    </source>
</evidence>
<evidence type="ECO:0000303" key="10">
    <source>
    </source>
</evidence>
<evidence type="ECO:0000305" key="11"/>
<evidence type="ECO:0007744" key="12">
    <source>
        <dbReference type="PDB" id="7SHF"/>
    </source>
</evidence>
<evidence type="ECO:0007829" key="13">
    <source>
        <dbReference type="PDB" id="2PBI"/>
    </source>
</evidence>
<evidence type="ECO:0007829" key="14">
    <source>
        <dbReference type="PDB" id="6N9G"/>
    </source>
</evidence>
<feature type="chain" id="PRO_0000127706" description="Guanine nucleotide-binding protein subunit beta-5">
    <location>
        <begin position="1"/>
        <end position="395"/>
    </location>
</feature>
<feature type="repeat" description="WD 1">
    <location>
        <begin position="103"/>
        <end position="142"/>
    </location>
</feature>
<feature type="repeat" description="WD 2">
    <location>
        <begin position="145"/>
        <end position="184"/>
    </location>
</feature>
<feature type="repeat" description="WD 3">
    <location>
        <begin position="193"/>
        <end position="234"/>
    </location>
</feature>
<feature type="repeat" description="WD 4">
    <location>
        <begin position="236"/>
        <end position="278"/>
    </location>
</feature>
<feature type="repeat" description="WD 5">
    <location>
        <begin position="279"/>
        <end position="318"/>
    </location>
</feature>
<feature type="repeat" description="WD 6">
    <location>
        <begin position="320"/>
        <end position="362"/>
    </location>
</feature>
<feature type="repeat" description="WD 7">
    <location>
        <begin position="365"/>
        <end position="394"/>
    </location>
</feature>
<feature type="splice variant" id="VSP_008766" description="In isoform 2." evidence="10">
    <location>
        <begin position="1"/>
        <end position="42"/>
    </location>
</feature>
<feature type="helix" evidence="13">
    <location>
        <begin position="52"/>
        <end position="73"/>
    </location>
</feature>
<feature type="helix" evidence="13">
    <location>
        <begin position="80"/>
        <end position="83"/>
    </location>
</feature>
<feature type="turn" evidence="13">
    <location>
        <begin position="84"/>
        <end position="86"/>
    </location>
</feature>
<feature type="strand" evidence="13">
    <location>
        <begin position="97"/>
        <end position="102"/>
    </location>
</feature>
<feature type="strand" evidence="13">
    <location>
        <begin position="108"/>
        <end position="113"/>
    </location>
</feature>
<feature type="strand" evidence="13">
    <location>
        <begin position="117"/>
        <end position="124"/>
    </location>
</feature>
<feature type="strand" evidence="13">
    <location>
        <begin position="127"/>
        <end position="133"/>
    </location>
</feature>
<feature type="turn" evidence="13">
    <location>
        <begin position="134"/>
        <end position="136"/>
    </location>
</feature>
<feature type="strand" evidence="13">
    <location>
        <begin position="139"/>
        <end position="144"/>
    </location>
</feature>
<feature type="strand" evidence="13">
    <location>
        <begin position="146"/>
        <end position="148"/>
    </location>
</feature>
<feature type="strand" evidence="13">
    <location>
        <begin position="152"/>
        <end position="155"/>
    </location>
</feature>
<feature type="strand" evidence="13">
    <location>
        <begin position="159"/>
        <end position="166"/>
    </location>
</feature>
<feature type="strand" evidence="13">
    <location>
        <begin position="169"/>
        <end position="175"/>
    </location>
</feature>
<feature type="strand" evidence="14">
    <location>
        <begin position="179"/>
        <end position="182"/>
    </location>
</feature>
<feature type="helix" evidence="13">
    <location>
        <begin position="185"/>
        <end position="187"/>
    </location>
</feature>
<feature type="strand" evidence="13">
    <location>
        <begin position="189"/>
        <end position="193"/>
    </location>
</feature>
<feature type="strand" evidence="13">
    <location>
        <begin position="198"/>
        <end position="203"/>
    </location>
</feature>
<feature type="strand" evidence="13">
    <location>
        <begin position="205"/>
        <end position="214"/>
    </location>
</feature>
<feature type="strand" evidence="13">
    <location>
        <begin position="217"/>
        <end position="223"/>
    </location>
</feature>
<feature type="turn" evidence="13">
    <location>
        <begin position="224"/>
        <end position="226"/>
    </location>
</feature>
<feature type="strand" evidence="13">
    <location>
        <begin position="229"/>
        <end position="234"/>
    </location>
</feature>
<feature type="strand" evidence="13">
    <location>
        <begin position="240"/>
        <end position="245"/>
    </location>
</feature>
<feature type="strand" evidence="13">
    <location>
        <begin position="253"/>
        <end position="258"/>
    </location>
</feature>
<feature type="strand" evidence="13">
    <location>
        <begin position="263"/>
        <end position="267"/>
    </location>
</feature>
<feature type="turn" evidence="13">
    <location>
        <begin position="268"/>
        <end position="270"/>
    </location>
</feature>
<feature type="strand" evidence="13">
    <location>
        <begin position="273"/>
        <end position="277"/>
    </location>
</feature>
<feature type="strand" evidence="13">
    <location>
        <begin position="284"/>
        <end position="289"/>
    </location>
</feature>
<feature type="strand" evidence="13">
    <location>
        <begin position="293"/>
        <end position="300"/>
    </location>
</feature>
<feature type="strand" evidence="13">
    <location>
        <begin position="305"/>
        <end position="309"/>
    </location>
</feature>
<feature type="turn" evidence="13">
    <location>
        <begin position="310"/>
        <end position="313"/>
    </location>
</feature>
<feature type="strand" evidence="13">
    <location>
        <begin position="314"/>
        <end position="319"/>
    </location>
</feature>
<feature type="strand" evidence="13">
    <location>
        <begin position="328"/>
        <end position="333"/>
    </location>
</feature>
<feature type="strand" evidence="13">
    <location>
        <begin position="337"/>
        <end position="344"/>
    </location>
</feature>
<feature type="strand" evidence="13">
    <location>
        <begin position="349"/>
        <end position="353"/>
    </location>
</feature>
<feature type="turn" evidence="13">
    <location>
        <begin position="354"/>
        <end position="356"/>
    </location>
</feature>
<feature type="strand" evidence="13">
    <location>
        <begin position="358"/>
        <end position="363"/>
    </location>
</feature>
<feature type="strand" evidence="13">
    <location>
        <begin position="370"/>
        <end position="375"/>
    </location>
</feature>
<feature type="strand" evidence="13">
    <location>
        <begin position="382"/>
        <end position="386"/>
    </location>
</feature>
<feature type="strand" evidence="13">
    <location>
        <begin position="389"/>
        <end position="394"/>
    </location>
</feature>
<protein>
    <recommendedName>
        <fullName>Guanine nucleotide-binding protein subunit beta-5</fullName>
    </recommendedName>
    <alternativeName>
        <fullName>Gbeta5</fullName>
    </alternativeName>
    <alternativeName>
        <fullName>Transducin beta chain 5</fullName>
    </alternativeName>
</protein>
<sequence>MCDQTFLVNVFGSCDKCFKQRALRPVFKKSQQLNYCSTCAEIMATDGLHENETLASLKSEAESLKGKLEEERAKLHDVELHQVAERVEALGQFVMKTRRTLKGHGNKVLCMDWCKDKRRIVSSSQDGKVIVWDSFTTNKEHAVTMPCTWVMACAYAPSGCAIACGGLDNKCSVYPLTFDKNENMAAKKKSVAMHTNYLSACSFTNSDMQILTASGDGTCALWDVESGQLLQSFHGHGADVLCLDLAPSETGNTFVSGGCDKKAMVWDMRSGQCVQAFETHESDVNSVRYYPSGDAFASGSDDATCRLYDLRADREVAIYSKESIIFGASSVDFSLSGRLLFAGYNDYTINVWDVLKGSRVSILFGHENRVSTLRVSPDGTAFCSGSWDHTLRVWA</sequence>